<feature type="chain" id="PRO_0000321641" description="Octanoyltransferase">
    <location>
        <begin position="1"/>
        <end position="214"/>
    </location>
</feature>
<feature type="domain" description="BPL/LPL catalytic" evidence="2">
    <location>
        <begin position="32"/>
        <end position="207"/>
    </location>
</feature>
<feature type="active site" description="Acyl-thioester intermediate" evidence="1">
    <location>
        <position position="169"/>
    </location>
</feature>
<feature type="binding site" evidence="1">
    <location>
        <begin position="71"/>
        <end position="78"/>
    </location>
    <ligand>
        <name>substrate</name>
    </ligand>
</feature>
<feature type="binding site" evidence="1">
    <location>
        <begin position="138"/>
        <end position="140"/>
    </location>
    <ligand>
        <name>substrate</name>
    </ligand>
</feature>
<feature type="binding site" evidence="1">
    <location>
        <begin position="151"/>
        <end position="153"/>
    </location>
    <ligand>
        <name>substrate</name>
    </ligand>
</feature>
<feature type="site" description="Lowers pKa of active site Cys" evidence="1">
    <location>
        <position position="135"/>
    </location>
</feature>
<gene>
    <name evidence="1" type="primary">lipB</name>
    <name type="ordered locus">KPN78578_06510</name>
    <name type="ORF">KPN_00662</name>
</gene>
<comment type="function">
    <text evidence="1">Catalyzes the transfer of endogenously produced octanoic acid from octanoyl-acyl-carrier-protein onto the lipoyl domains of lipoate-dependent enzymes. Lipoyl-ACP can also act as a substrate although octanoyl-ACP is likely to be the physiological substrate.</text>
</comment>
<comment type="catalytic activity">
    <reaction evidence="1">
        <text>octanoyl-[ACP] + L-lysyl-[protein] = N(6)-octanoyl-L-lysyl-[protein] + holo-[ACP] + H(+)</text>
        <dbReference type="Rhea" id="RHEA:17665"/>
        <dbReference type="Rhea" id="RHEA-COMP:9636"/>
        <dbReference type="Rhea" id="RHEA-COMP:9685"/>
        <dbReference type="Rhea" id="RHEA-COMP:9752"/>
        <dbReference type="Rhea" id="RHEA-COMP:9928"/>
        <dbReference type="ChEBI" id="CHEBI:15378"/>
        <dbReference type="ChEBI" id="CHEBI:29969"/>
        <dbReference type="ChEBI" id="CHEBI:64479"/>
        <dbReference type="ChEBI" id="CHEBI:78463"/>
        <dbReference type="ChEBI" id="CHEBI:78809"/>
        <dbReference type="EC" id="2.3.1.181"/>
    </reaction>
</comment>
<comment type="pathway">
    <text evidence="1">Protein modification; protein lipoylation via endogenous pathway; protein N(6)-(lipoyl)lysine from octanoyl-[acyl-carrier-protein]: step 1/2.</text>
</comment>
<comment type="subcellular location">
    <subcellularLocation>
        <location evidence="1">Cytoplasm</location>
    </subcellularLocation>
</comment>
<comment type="miscellaneous">
    <text evidence="1">In the reaction, the free carboxyl group of octanoic acid is attached via an amide linkage to the epsilon-amino group of a specific lysine residue of lipoyl domains of lipoate-dependent enzymes.</text>
</comment>
<comment type="similarity">
    <text evidence="1">Belongs to the LipB family.</text>
</comment>
<comment type="sequence caution" evidence="3">
    <conflict type="erroneous initiation">
        <sequence resource="EMBL-CDS" id="ABR76112"/>
    </conflict>
    <text>Truncated N-terminus.</text>
</comment>
<dbReference type="EC" id="2.3.1.181" evidence="1"/>
<dbReference type="EMBL" id="CP000647">
    <property type="protein sequence ID" value="ABR76112.1"/>
    <property type="status" value="ALT_INIT"/>
    <property type="molecule type" value="Genomic_DNA"/>
</dbReference>
<dbReference type="RefSeq" id="WP_002894472.1">
    <property type="nucleotide sequence ID" value="NC_009648.1"/>
</dbReference>
<dbReference type="SMR" id="A6T691"/>
<dbReference type="STRING" id="272620.KPN_00662"/>
<dbReference type="jPOST" id="A6T691"/>
<dbReference type="PaxDb" id="272620-KPN_00662"/>
<dbReference type="EnsemblBacteria" id="ABR76112">
    <property type="protein sequence ID" value="ABR76112"/>
    <property type="gene ID" value="KPN_00662"/>
</dbReference>
<dbReference type="KEGG" id="kpn:KPN_00662"/>
<dbReference type="HOGENOM" id="CLU_035168_3_1_6"/>
<dbReference type="UniPathway" id="UPA00538">
    <property type="reaction ID" value="UER00592"/>
</dbReference>
<dbReference type="Proteomes" id="UP000000265">
    <property type="component" value="Chromosome"/>
</dbReference>
<dbReference type="GO" id="GO:0005737">
    <property type="term" value="C:cytoplasm"/>
    <property type="evidence" value="ECO:0007669"/>
    <property type="project" value="UniProtKB-SubCell"/>
</dbReference>
<dbReference type="GO" id="GO:0033819">
    <property type="term" value="F:lipoyl(octanoyl) transferase activity"/>
    <property type="evidence" value="ECO:0007669"/>
    <property type="project" value="UniProtKB-EC"/>
</dbReference>
<dbReference type="GO" id="GO:0036211">
    <property type="term" value="P:protein modification process"/>
    <property type="evidence" value="ECO:0007669"/>
    <property type="project" value="InterPro"/>
</dbReference>
<dbReference type="CDD" id="cd16444">
    <property type="entry name" value="LipB"/>
    <property type="match status" value="1"/>
</dbReference>
<dbReference type="FunFam" id="3.30.930.10:FF:000020">
    <property type="entry name" value="Octanoyltransferase"/>
    <property type="match status" value="1"/>
</dbReference>
<dbReference type="Gene3D" id="3.30.930.10">
    <property type="entry name" value="Bira Bifunctional Protein, Domain 2"/>
    <property type="match status" value="1"/>
</dbReference>
<dbReference type="HAMAP" id="MF_00013">
    <property type="entry name" value="LipB"/>
    <property type="match status" value="1"/>
</dbReference>
<dbReference type="InterPro" id="IPR045864">
    <property type="entry name" value="aa-tRNA-synth_II/BPL/LPL"/>
</dbReference>
<dbReference type="InterPro" id="IPR004143">
    <property type="entry name" value="BPL_LPL_catalytic"/>
</dbReference>
<dbReference type="InterPro" id="IPR000544">
    <property type="entry name" value="Octanoyltransferase"/>
</dbReference>
<dbReference type="InterPro" id="IPR020605">
    <property type="entry name" value="Octanoyltransferase_CS"/>
</dbReference>
<dbReference type="NCBIfam" id="TIGR00214">
    <property type="entry name" value="lipB"/>
    <property type="match status" value="1"/>
</dbReference>
<dbReference type="NCBIfam" id="NF010922">
    <property type="entry name" value="PRK14342.1"/>
    <property type="match status" value="1"/>
</dbReference>
<dbReference type="PANTHER" id="PTHR10993:SF7">
    <property type="entry name" value="LIPOYLTRANSFERASE 2, MITOCHONDRIAL-RELATED"/>
    <property type="match status" value="1"/>
</dbReference>
<dbReference type="PANTHER" id="PTHR10993">
    <property type="entry name" value="OCTANOYLTRANSFERASE"/>
    <property type="match status" value="1"/>
</dbReference>
<dbReference type="Pfam" id="PF21948">
    <property type="entry name" value="LplA-B_cat"/>
    <property type="match status" value="1"/>
</dbReference>
<dbReference type="PIRSF" id="PIRSF016262">
    <property type="entry name" value="LPLase"/>
    <property type="match status" value="1"/>
</dbReference>
<dbReference type="SUPFAM" id="SSF55681">
    <property type="entry name" value="Class II aaRS and biotin synthetases"/>
    <property type="match status" value="1"/>
</dbReference>
<dbReference type="PROSITE" id="PS51733">
    <property type="entry name" value="BPL_LPL_CATALYTIC"/>
    <property type="match status" value="1"/>
</dbReference>
<dbReference type="PROSITE" id="PS01313">
    <property type="entry name" value="LIPB"/>
    <property type="match status" value="1"/>
</dbReference>
<protein>
    <recommendedName>
        <fullName evidence="1">Octanoyltransferase</fullName>
        <ecNumber evidence="1">2.3.1.181</ecNumber>
    </recommendedName>
    <alternativeName>
        <fullName evidence="1">Lipoate-protein ligase B</fullName>
    </alternativeName>
    <alternativeName>
        <fullName evidence="1">Lipoyl/octanoyl transferase</fullName>
    </alternativeName>
    <alternativeName>
        <fullName evidence="1">Octanoyl-[acyl-carrier-protein]-protein N-octanoyltransferase</fullName>
    </alternativeName>
</protein>
<keyword id="KW-0012">Acyltransferase</keyword>
<keyword id="KW-0963">Cytoplasm</keyword>
<keyword id="KW-0808">Transferase</keyword>
<accession>A6T691</accession>
<sequence length="214" mass="24026">MQHNKILIRQLGLQPYEPVSQAMHEFTDARDEDTLDEIWLVEHHPVFTQGQAGKAEHVLVPGDIPVIQSDRGGQVTYHGPGQQVMYVLLDLKRRKLGVRELVTLLEQTVVNTLAEYSIESHPRADAPGVYVGERKICSLGLRIRKGCSFHGLALNIAMDLTPFLRINPCGYAGMEMTQMRQWQPAASPETVAPRLVANLLALLNHPPHEYLPRD</sequence>
<evidence type="ECO:0000255" key="1">
    <source>
        <dbReference type="HAMAP-Rule" id="MF_00013"/>
    </source>
</evidence>
<evidence type="ECO:0000255" key="2">
    <source>
        <dbReference type="PROSITE-ProRule" id="PRU01067"/>
    </source>
</evidence>
<evidence type="ECO:0000305" key="3"/>
<proteinExistence type="inferred from homology"/>
<name>LIPB_KLEP7</name>
<reference key="1">
    <citation type="submission" date="2006-09" db="EMBL/GenBank/DDBJ databases">
        <authorList>
            <consortium name="The Klebsiella pneumonia Genome Sequencing Project"/>
            <person name="McClelland M."/>
            <person name="Sanderson E.K."/>
            <person name="Spieth J."/>
            <person name="Clifton W.S."/>
            <person name="Latreille P."/>
            <person name="Sabo A."/>
            <person name="Pepin K."/>
            <person name="Bhonagiri V."/>
            <person name="Porwollik S."/>
            <person name="Ali J."/>
            <person name="Wilson R.K."/>
        </authorList>
    </citation>
    <scope>NUCLEOTIDE SEQUENCE [LARGE SCALE GENOMIC DNA]</scope>
    <source>
        <strain>ATCC 700721 / MGH 78578</strain>
    </source>
</reference>
<organism>
    <name type="scientific">Klebsiella pneumoniae subsp. pneumoniae (strain ATCC 700721 / MGH 78578)</name>
    <dbReference type="NCBI Taxonomy" id="272620"/>
    <lineage>
        <taxon>Bacteria</taxon>
        <taxon>Pseudomonadati</taxon>
        <taxon>Pseudomonadota</taxon>
        <taxon>Gammaproteobacteria</taxon>
        <taxon>Enterobacterales</taxon>
        <taxon>Enterobacteriaceae</taxon>
        <taxon>Klebsiella/Raoultella group</taxon>
        <taxon>Klebsiella</taxon>
        <taxon>Klebsiella pneumoniae complex</taxon>
    </lineage>
</organism>